<name>LPXK_SHEON</name>
<gene>
    <name evidence="1" type="primary">lpxK</name>
    <name type="ordered locus">SO_2801</name>
</gene>
<accession>Q8EDF1</accession>
<organism>
    <name type="scientific">Shewanella oneidensis (strain ATCC 700550 / JCM 31522 / CIP 106686 / LMG 19005 / NCIMB 14063 / MR-1)</name>
    <dbReference type="NCBI Taxonomy" id="211586"/>
    <lineage>
        <taxon>Bacteria</taxon>
        <taxon>Pseudomonadati</taxon>
        <taxon>Pseudomonadota</taxon>
        <taxon>Gammaproteobacteria</taxon>
        <taxon>Alteromonadales</taxon>
        <taxon>Shewanellaceae</taxon>
        <taxon>Shewanella</taxon>
    </lineage>
</organism>
<reference key="1">
    <citation type="journal article" date="2002" name="Nat. Biotechnol.">
        <title>Genome sequence of the dissimilatory metal ion-reducing bacterium Shewanella oneidensis.</title>
        <authorList>
            <person name="Heidelberg J.F."/>
            <person name="Paulsen I.T."/>
            <person name="Nelson K.E."/>
            <person name="Gaidos E.J."/>
            <person name="Nelson W.C."/>
            <person name="Read T.D."/>
            <person name="Eisen J.A."/>
            <person name="Seshadri R."/>
            <person name="Ward N.L."/>
            <person name="Methe B.A."/>
            <person name="Clayton R.A."/>
            <person name="Meyer T."/>
            <person name="Tsapin A."/>
            <person name="Scott J."/>
            <person name="Beanan M.J."/>
            <person name="Brinkac L.M."/>
            <person name="Daugherty S.C."/>
            <person name="DeBoy R.T."/>
            <person name="Dodson R.J."/>
            <person name="Durkin A.S."/>
            <person name="Haft D.H."/>
            <person name="Kolonay J.F."/>
            <person name="Madupu R."/>
            <person name="Peterson J.D."/>
            <person name="Umayam L.A."/>
            <person name="White O."/>
            <person name="Wolf A.M."/>
            <person name="Vamathevan J.J."/>
            <person name="Weidman J.F."/>
            <person name="Impraim M."/>
            <person name="Lee K."/>
            <person name="Berry K.J."/>
            <person name="Lee C."/>
            <person name="Mueller J."/>
            <person name="Khouri H.M."/>
            <person name="Gill J."/>
            <person name="Utterback T.R."/>
            <person name="McDonald L.A."/>
            <person name="Feldblyum T.V."/>
            <person name="Smith H.O."/>
            <person name="Venter J.C."/>
            <person name="Nealson K.H."/>
            <person name="Fraser C.M."/>
        </authorList>
    </citation>
    <scope>NUCLEOTIDE SEQUENCE [LARGE SCALE GENOMIC DNA]</scope>
    <source>
        <strain>ATCC 700550 / JCM 31522 / CIP 106686 / LMG 19005 / NCIMB 14063 / MR-1</strain>
    </source>
</reference>
<evidence type="ECO:0000255" key="1">
    <source>
        <dbReference type="HAMAP-Rule" id="MF_00409"/>
    </source>
</evidence>
<keyword id="KW-0067">ATP-binding</keyword>
<keyword id="KW-0418">Kinase</keyword>
<keyword id="KW-0441">Lipid A biosynthesis</keyword>
<keyword id="KW-0444">Lipid biosynthesis</keyword>
<keyword id="KW-0443">Lipid metabolism</keyword>
<keyword id="KW-0547">Nucleotide-binding</keyword>
<keyword id="KW-1185">Reference proteome</keyword>
<keyword id="KW-0808">Transferase</keyword>
<feature type="chain" id="PRO_0000190951" description="Tetraacyldisaccharide 4'-kinase">
    <location>
        <begin position="1"/>
        <end position="335"/>
    </location>
</feature>
<feature type="binding site" evidence="1">
    <location>
        <begin position="58"/>
        <end position="65"/>
    </location>
    <ligand>
        <name>ATP</name>
        <dbReference type="ChEBI" id="CHEBI:30616"/>
    </ligand>
</feature>
<dbReference type="EC" id="2.7.1.130" evidence="1"/>
<dbReference type="EMBL" id="AE014299">
    <property type="protein sequence ID" value="AAN55823.1"/>
    <property type="molecule type" value="Genomic_DNA"/>
</dbReference>
<dbReference type="RefSeq" id="NP_718379.1">
    <property type="nucleotide sequence ID" value="NC_004347.2"/>
</dbReference>
<dbReference type="RefSeq" id="WP_011072734.1">
    <property type="nucleotide sequence ID" value="NC_004347.2"/>
</dbReference>
<dbReference type="SMR" id="Q8EDF1"/>
<dbReference type="STRING" id="211586.SO_2801"/>
<dbReference type="PaxDb" id="211586-SO_2801"/>
<dbReference type="KEGG" id="son:SO_2801"/>
<dbReference type="PATRIC" id="fig|211586.12.peg.2702"/>
<dbReference type="eggNOG" id="COG1663">
    <property type="taxonomic scope" value="Bacteria"/>
</dbReference>
<dbReference type="HOGENOM" id="CLU_038816_2_0_6"/>
<dbReference type="OrthoDB" id="9766423at2"/>
<dbReference type="PhylomeDB" id="Q8EDF1"/>
<dbReference type="BioCyc" id="SONE211586:G1GMP-2587-MONOMER"/>
<dbReference type="UniPathway" id="UPA00359">
    <property type="reaction ID" value="UER00482"/>
</dbReference>
<dbReference type="Proteomes" id="UP000008186">
    <property type="component" value="Chromosome"/>
</dbReference>
<dbReference type="GO" id="GO:0005886">
    <property type="term" value="C:plasma membrane"/>
    <property type="evidence" value="ECO:0000318"/>
    <property type="project" value="GO_Central"/>
</dbReference>
<dbReference type="GO" id="GO:0005524">
    <property type="term" value="F:ATP binding"/>
    <property type="evidence" value="ECO:0007669"/>
    <property type="project" value="UniProtKB-UniRule"/>
</dbReference>
<dbReference type="GO" id="GO:0009029">
    <property type="term" value="F:tetraacyldisaccharide 4'-kinase activity"/>
    <property type="evidence" value="ECO:0000318"/>
    <property type="project" value="GO_Central"/>
</dbReference>
<dbReference type="GO" id="GO:0009245">
    <property type="term" value="P:lipid A biosynthetic process"/>
    <property type="evidence" value="ECO:0000318"/>
    <property type="project" value="GO_Central"/>
</dbReference>
<dbReference type="GO" id="GO:0009244">
    <property type="term" value="P:lipopolysaccharide core region biosynthetic process"/>
    <property type="evidence" value="ECO:0000318"/>
    <property type="project" value="GO_Central"/>
</dbReference>
<dbReference type="HAMAP" id="MF_00409">
    <property type="entry name" value="LpxK"/>
    <property type="match status" value="1"/>
</dbReference>
<dbReference type="InterPro" id="IPR003758">
    <property type="entry name" value="LpxK"/>
</dbReference>
<dbReference type="InterPro" id="IPR027417">
    <property type="entry name" value="P-loop_NTPase"/>
</dbReference>
<dbReference type="NCBIfam" id="TIGR00682">
    <property type="entry name" value="lpxK"/>
    <property type="match status" value="1"/>
</dbReference>
<dbReference type="PANTHER" id="PTHR42724">
    <property type="entry name" value="TETRAACYLDISACCHARIDE 4'-KINASE"/>
    <property type="match status" value="1"/>
</dbReference>
<dbReference type="PANTHER" id="PTHR42724:SF1">
    <property type="entry name" value="TETRAACYLDISACCHARIDE 4'-KINASE, MITOCHONDRIAL-RELATED"/>
    <property type="match status" value="1"/>
</dbReference>
<dbReference type="Pfam" id="PF02606">
    <property type="entry name" value="LpxK"/>
    <property type="match status" value="1"/>
</dbReference>
<dbReference type="SUPFAM" id="SSF52540">
    <property type="entry name" value="P-loop containing nucleoside triphosphate hydrolases"/>
    <property type="match status" value="1"/>
</dbReference>
<comment type="function">
    <text evidence="1">Transfers the gamma-phosphate of ATP to the 4'-position of a tetraacyldisaccharide 1-phosphate intermediate (termed DS-1-P) to form tetraacyldisaccharide 1,4'-bis-phosphate (lipid IVA).</text>
</comment>
<comment type="catalytic activity">
    <reaction evidence="1">
        <text>a lipid A disaccharide + ATP = a lipid IVA + ADP + H(+)</text>
        <dbReference type="Rhea" id="RHEA:67840"/>
        <dbReference type="ChEBI" id="CHEBI:15378"/>
        <dbReference type="ChEBI" id="CHEBI:30616"/>
        <dbReference type="ChEBI" id="CHEBI:176343"/>
        <dbReference type="ChEBI" id="CHEBI:176425"/>
        <dbReference type="ChEBI" id="CHEBI:456216"/>
        <dbReference type="EC" id="2.7.1.130"/>
    </reaction>
</comment>
<comment type="pathway">
    <text evidence="1">Glycolipid biosynthesis; lipid IV(A) biosynthesis; lipid IV(A) from (3R)-3-hydroxytetradecanoyl-[acyl-carrier-protein] and UDP-N-acetyl-alpha-D-glucosamine: step 6/6.</text>
</comment>
<comment type="similarity">
    <text evidence="1">Belongs to the LpxK family.</text>
</comment>
<sequence length="335" mass="36693">MQALVNKIWYQGHPLRWLLLPLSALFAFITAFRRSLFRLGIKSQTTLPVPVIVVGNITVGGSGKTPTVIYLIELLRNQGFNPGVISRGYGAQFQGVKVVTVKDAATDVGDEPAMIVARTGVPMVVGAKRVETAKALLTQFAVDVIICDDGLQHYALGRDIELVVIDGKRGLGNRNLLPAGPLREGEWRLNQVDFVIVNGGPAVANQYEMQLRPCAVLPVSPAVTAEFDSTQPLVAMAGIGHPARFFETLTQQGYQVALSHSFDDHQAYDKRQLCELAASRPLMMTEKDAVKCRDFAQENWWYLAVDAKLSPQFDQQLLSRLRSVAAAKKGKSHGV</sequence>
<protein>
    <recommendedName>
        <fullName evidence="1">Tetraacyldisaccharide 4'-kinase</fullName>
        <ecNumber evidence="1">2.7.1.130</ecNumber>
    </recommendedName>
    <alternativeName>
        <fullName evidence="1">Lipid A 4'-kinase</fullName>
    </alternativeName>
</protein>
<proteinExistence type="inferred from homology"/>